<proteinExistence type="evidence at transcript level"/>
<sequence>MALRVQFENNDDIGVFTKLTNTYCLVAIGGSETFYSAFEAELGDTIPVVHANVGGCRIIGRLTVGNRNGLLVPNSTTDEELQHLRNSLPDAVKIYRVEERLSALGNVIACNDYVALVHPDLDKETEEIIADVLKVEVFRQTIADNSLVGSYAVLSNQGGMVHPKTSIQDQDELSSLLQVPLVAGTVNRGSEVLAAGMVVNDWLSFVGMNTTATEISVIESVFKLNQAQPATVTTKLRAALIEDMS</sequence>
<dbReference type="EMBL" id="X97641">
    <property type="status" value="NOT_ANNOTATED_CDS"/>
    <property type="molecule type" value="Genomic_DNA"/>
</dbReference>
<dbReference type="EMBL" id="AE013599">
    <property type="protein sequence ID" value="AAF47074.1"/>
    <property type="molecule type" value="Genomic_DNA"/>
</dbReference>
<dbReference type="EMBL" id="AY094688">
    <property type="protein sequence ID" value="AAM11041.1"/>
    <property type="molecule type" value="mRNA"/>
</dbReference>
<dbReference type="RefSeq" id="NP_659573.1">
    <property type="nucleotide sequence ID" value="NM_145105.3"/>
</dbReference>
<dbReference type="SMR" id="P56538"/>
<dbReference type="BioGRID" id="63371">
    <property type="interactions" value="4"/>
</dbReference>
<dbReference type="FunCoup" id="P56538">
    <property type="interactions" value="1490"/>
</dbReference>
<dbReference type="IntAct" id="P56538">
    <property type="interactions" value="24"/>
</dbReference>
<dbReference type="STRING" id="7227.FBpp0072144"/>
<dbReference type="PaxDb" id="7227-FBpp0072144"/>
<dbReference type="DNASU" id="37776"/>
<dbReference type="EnsemblMetazoa" id="FBtr0072235">
    <property type="protein sequence ID" value="FBpp0072144"/>
    <property type="gene ID" value="FBgn0034915"/>
</dbReference>
<dbReference type="GeneID" id="37776"/>
<dbReference type="KEGG" id="dme:Dmel_CG17611"/>
<dbReference type="UCSC" id="CG17611-RA">
    <property type="organism name" value="d. melanogaster"/>
</dbReference>
<dbReference type="AGR" id="FB:FBgn0034915"/>
<dbReference type="CTD" id="3692"/>
<dbReference type="FlyBase" id="FBgn0034915">
    <property type="gene designation" value="eIF6"/>
</dbReference>
<dbReference type="VEuPathDB" id="VectorBase:FBgn0034915"/>
<dbReference type="eggNOG" id="KOG3185">
    <property type="taxonomic scope" value="Eukaryota"/>
</dbReference>
<dbReference type="GeneTree" id="ENSGT00390000015972"/>
<dbReference type="HOGENOM" id="CLU_071894_0_0_1"/>
<dbReference type="InParanoid" id="P56538"/>
<dbReference type="OMA" id="WCAFCGM"/>
<dbReference type="OrthoDB" id="4155914at2759"/>
<dbReference type="PhylomeDB" id="P56538"/>
<dbReference type="BioGRID-ORCS" id="37776">
    <property type="hits" value="1 hit in 1 CRISPR screen"/>
</dbReference>
<dbReference type="GenomeRNAi" id="37776"/>
<dbReference type="PRO" id="PR:P56538"/>
<dbReference type="Proteomes" id="UP000000803">
    <property type="component" value="Chromosome 2R"/>
</dbReference>
<dbReference type="Bgee" id="FBgn0034915">
    <property type="expression patterns" value="Expressed in adult tracheocyte (Drosophila) in open tracheal system trachea and 102 other cell types or tissues"/>
</dbReference>
<dbReference type="GO" id="GO:0005829">
    <property type="term" value="C:cytosol"/>
    <property type="evidence" value="ECO:0000250"/>
    <property type="project" value="FlyBase"/>
</dbReference>
<dbReference type="GO" id="GO:0005730">
    <property type="term" value="C:nucleolus"/>
    <property type="evidence" value="ECO:0007669"/>
    <property type="project" value="UniProtKB-SubCell"/>
</dbReference>
<dbReference type="GO" id="GO:0005634">
    <property type="term" value="C:nucleus"/>
    <property type="evidence" value="ECO:0000318"/>
    <property type="project" value="GO_Central"/>
</dbReference>
<dbReference type="GO" id="GO:0043023">
    <property type="term" value="F:ribosomal large subunit binding"/>
    <property type="evidence" value="ECO:0000318"/>
    <property type="project" value="GO_Central"/>
</dbReference>
<dbReference type="GO" id="GO:0003743">
    <property type="term" value="F:translation initiation factor activity"/>
    <property type="evidence" value="ECO:0000250"/>
    <property type="project" value="FlyBase"/>
</dbReference>
<dbReference type="GO" id="GO:1902626">
    <property type="term" value="P:assembly of large subunit precursor of preribosome"/>
    <property type="evidence" value="ECO:0000318"/>
    <property type="project" value="GO_Central"/>
</dbReference>
<dbReference type="GO" id="GO:0042256">
    <property type="term" value="P:cytosolic ribosome assembly"/>
    <property type="evidence" value="ECO:0007669"/>
    <property type="project" value="UniProtKB-UniRule"/>
</dbReference>
<dbReference type="GO" id="GO:0000460">
    <property type="term" value="P:maturation of 5.8S rRNA"/>
    <property type="evidence" value="ECO:0000318"/>
    <property type="project" value="GO_Central"/>
</dbReference>
<dbReference type="GO" id="GO:0000470">
    <property type="term" value="P:maturation of LSU-rRNA"/>
    <property type="evidence" value="ECO:0000318"/>
    <property type="project" value="GO_Central"/>
</dbReference>
<dbReference type="GO" id="GO:0000054">
    <property type="term" value="P:ribosomal subunit export from nucleus"/>
    <property type="evidence" value="ECO:0000318"/>
    <property type="project" value="GO_Central"/>
</dbReference>
<dbReference type="GO" id="GO:0006413">
    <property type="term" value="P:translational initiation"/>
    <property type="evidence" value="ECO:0000250"/>
    <property type="project" value="FlyBase"/>
</dbReference>
<dbReference type="CDD" id="cd00527">
    <property type="entry name" value="IF6"/>
    <property type="match status" value="1"/>
</dbReference>
<dbReference type="FunFam" id="3.75.10.10:FF:000001">
    <property type="entry name" value="Eukaryotic translation initiation factor 6"/>
    <property type="match status" value="1"/>
</dbReference>
<dbReference type="Gene3D" id="3.75.10.10">
    <property type="entry name" value="L-arginine/glycine Amidinotransferase, Chain A"/>
    <property type="match status" value="1"/>
</dbReference>
<dbReference type="HAMAP" id="MF_00032">
    <property type="entry name" value="eIF_6"/>
    <property type="match status" value="1"/>
</dbReference>
<dbReference type="InterPro" id="IPR002769">
    <property type="entry name" value="eIF6"/>
</dbReference>
<dbReference type="NCBIfam" id="TIGR00323">
    <property type="entry name" value="eIF-6"/>
    <property type="match status" value="1"/>
</dbReference>
<dbReference type="PANTHER" id="PTHR10784">
    <property type="entry name" value="TRANSLATION INITIATION FACTOR 6"/>
    <property type="match status" value="1"/>
</dbReference>
<dbReference type="Pfam" id="PF01912">
    <property type="entry name" value="eIF-6"/>
    <property type="match status" value="1"/>
</dbReference>
<dbReference type="PIRSF" id="PIRSF006413">
    <property type="entry name" value="IF-6"/>
    <property type="match status" value="1"/>
</dbReference>
<dbReference type="SMART" id="SM00654">
    <property type="entry name" value="eIF6"/>
    <property type="match status" value="1"/>
</dbReference>
<dbReference type="SUPFAM" id="SSF55909">
    <property type="entry name" value="Pentein"/>
    <property type="match status" value="1"/>
</dbReference>
<organism>
    <name type="scientific">Drosophila melanogaster</name>
    <name type="common">Fruit fly</name>
    <dbReference type="NCBI Taxonomy" id="7227"/>
    <lineage>
        <taxon>Eukaryota</taxon>
        <taxon>Metazoa</taxon>
        <taxon>Ecdysozoa</taxon>
        <taxon>Arthropoda</taxon>
        <taxon>Hexapoda</taxon>
        <taxon>Insecta</taxon>
        <taxon>Pterygota</taxon>
        <taxon>Neoptera</taxon>
        <taxon>Endopterygota</taxon>
        <taxon>Diptera</taxon>
        <taxon>Brachycera</taxon>
        <taxon>Muscomorpha</taxon>
        <taxon>Ephydroidea</taxon>
        <taxon>Drosophilidae</taxon>
        <taxon>Drosophila</taxon>
        <taxon>Sophophora</taxon>
    </lineage>
</organism>
<gene>
    <name evidence="1" type="primary">eIF6</name>
    <name type="ORF">CG17611</name>
</gene>
<name>IF6_DROME</name>
<reference key="1">
    <citation type="thesis" date="1996" institute="Johannes-Gutenberg University / Mainz" country="Germany">
        <authorList>
            <person name="Kaiser S."/>
        </authorList>
    </citation>
    <scope>NUCLEOTIDE SEQUENCE [GENOMIC DNA]</scope>
    <source>
        <strain>Oregon-R</strain>
    </source>
</reference>
<reference key="2">
    <citation type="journal article" date="2000" name="Science">
        <title>The genome sequence of Drosophila melanogaster.</title>
        <authorList>
            <person name="Adams M.D."/>
            <person name="Celniker S.E."/>
            <person name="Holt R.A."/>
            <person name="Evans C.A."/>
            <person name="Gocayne J.D."/>
            <person name="Amanatides P.G."/>
            <person name="Scherer S.E."/>
            <person name="Li P.W."/>
            <person name="Hoskins R.A."/>
            <person name="Galle R.F."/>
            <person name="George R.A."/>
            <person name="Lewis S.E."/>
            <person name="Richards S."/>
            <person name="Ashburner M."/>
            <person name="Henderson S.N."/>
            <person name="Sutton G.G."/>
            <person name="Wortman J.R."/>
            <person name="Yandell M.D."/>
            <person name="Zhang Q."/>
            <person name="Chen L.X."/>
            <person name="Brandon R.C."/>
            <person name="Rogers Y.-H.C."/>
            <person name="Blazej R.G."/>
            <person name="Champe M."/>
            <person name="Pfeiffer B.D."/>
            <person name="Wan K.H."/>
            <person name="Doyle C."/>
            <person name="Baxter E.G."/>
            <person name="Helt G."/>
            <person name="Nelson C.R."/>
            <person name="Miklos G.L.G."/>
            <person name="Abril J.F."/>
            <person name="Agbayani A."/>
            <person name="An H.-J."/>
            <person name="Andrews-Pfannkoch C."/>
            <person name="Baldwin D."/>
            <person name="Ballew R.M."/>
            <person name="Basu A."/>
            <person name="Baxendale J."/>
            <person name="Bayraktaroglu L."/>
            <person name="Beasley E.M."/>
            <person name="Beeson K.Y."/>
            <person name="Benos P.V."/>
            <person name="Berman B.P."/>
            <person name="Bhandari D."/>
            <person name="Bolshakov S."/>
            <person name="Borkova D."/>
            <person name="Botchan M.R."/>
            <person name="Bouck J."/>
            <person name="Brokstein P."/>
            <person name="Brottier P."/>
            <person name="Burtis K.C."/>
            <person name="Busam D.A."/>
            <person name="Butler H."/>
            <person name="Cadieu E."/>
            <person name="Center A."/>
            <person name="Chandra I."/>
            <person name="Cherry J.M."/>
            <person name="Cawley S."/>
            <person name="Dahlke C."/>
            <person name="Davenport L.B."/>
            <person name="Davies P."/>
            <person name="de Pablos B."/>
            <person name="Delcher A."/>
            <person name="Deng Z."/>
            <person name="Mays A.D."/>
            <person name="Dew I."/>
            <person name="Dietz S.M."/>
            <person name="Dodson K."/>
            <person name="Doup L.E."/>
            <person name="Downes M."/>
            <person name="Dugan-Rocha S."/>
            <person name="Dunkov B.C."/>
            <person name="Dunn P."/>
            <person name="Durbin K.J."/>
            <person name="Evangelista C.C."/>
            <person name="Ferraz C."/>
            <person name="Ferriera S."/>
            <person name="Fleischmann W."/>
            <person name="Fosler C."/>
            <person name="Gabrielian A.E."/>
            <person name="Garg N.S."/>
            <person name="Gelbart W.M."/>
            <person name="Glasser K."/>
            <person name="Glodek A."/>
            <person name="Gong F."/>
            <person name="Gorrell J.H."/>
            <person name="Gu Z."/>
            <person name="Guan P."/>
            <person name="Harris M."/>
            <person name="Harris N.L."/>
            <person name="Harvey D.A."/>
            <person name="Heiman T.J."/>
            <person name="Hernandez J.R."/>
            <person name="Houck J."/>
            <person name="Hostin D."/>
            <person name="Houston K.A."/>
            <person name="Howland T.J."/>
            <person name="Wei M.-H."/>
            <person name="Ibegwam C."/>
            <person name="Jalali M."/>
            <person name="Kalush F."/>
            <person name="Karpen G.H."/>
            <person name="Ke Z."/>
            <person name="Kennison J.A."/>
            <person name="Ketchum K.A."/>
            <person name="Kimmel B.E."/>
            <person name="Kodira C.D."/>
            <person name="Kraft C.L."/>
            <person name="Kravitz S."/>
            <person name="Kulp D."/>
            <person name="Lai Z."/>
            <person name="Lasko P."/>
            <person name="Lei Y."/>
            <person name="Levitsky A.A."/>
            <person name="Li J.H."/>
            <person name="Li Z."/>
            <person name="Liang Y."/>
            <person name="Lin X."/>
            <person name="Liu X."/>
            <person name="Mattei B."/>
            <person name="McIntosh T.C."/>
            <person name="McLeod M.P."/>
            <person name="McPherson D."/>
            <person name="Merkulov G."/>
            <person name="Milshina N.V."/>
            <person name="Mobarry C."/>
            <person name="Morris J."/>
            <person name="Moshrefi A."/>
            <person name="Mount S.M."/>
            <person name="Moy M."/>
            <person name="Murphy B."/>
            <person name="Murphy L."/>
            <person name="Muzny D.M."/>
            <person name="Nelson D.L."/>
            <person name="Nelson D.R."/>
            <person name="Nelson K.A."/>
            <person name="Nixon K."/>
            <person name="Nusskern D.R."/>
            <person name="Pacleb J.M."/>
            <person name="Palazzolo M."/>
            <person name="Pittman G.S."/>
            <person name="Pan S."/>
            <person name="Pollard J."/>
            <person name="Puri V."/>
            <person name="Reese M.G."/>
            <person name="Reinert K."/>
            <person name="Remington K."/>
            <person name="Saunders R.D.C."/>
            <person name="Scheeler F."/>
            <person name="Shen H."/>
            <person name="Shue B.C."/>
            <person name="Siden-Kiamos I."/>
            <person name="Simpson M."/>
            <person name="Skupski M.P."/>
            <person name="Smith T.J."/>
            <person name="Spier E."/>
            <person name="Spradling A.C."/>
            <person name="Stapleton M."/>
            <person name="Strong R."/>
            <person name="Sun E."/>
            <person name="Svirskas R."/>
            <person name="Tector C."/>
            <person name="Turner R."/>
            <person name="Venter E."/>
            <person name="Wang A.H."/>
            <person name="Wang X."/>
            <person name="Wang Z.-Y."/>
            <person name="Wassarman D.A."/>
            <person name="Weinstock G.M."/>
            <person name="Weissenbach J."/>
            <person name="Williams S.M."/>
            <person name="Woodage T."/>
            <person name="Worley K.C."/>
            <person name="Wu D."/>
            <person name="Yang S."/>
            <person name="Yao Q.A."/>
            <person name="Ye J."/>
            <person name="Yeh R.-F."/>
            <person name="Zaveri J.S."/>
            <person name="Zhan M."/>
            <person name="Zhang G."/>
            <person name="Zhao Q."/>
            <person name="Zheng L."/>
            <person name="Zheng X.H."/>
            <person name="Zhong F.N."/>
            <person name="Zhong W."/>
            <person name="Zhou X."/>
            <person name="Zhu S.C."/>
            <person name="Zhu X."/>
            <person name="Smith H.O."/>
            <person name="Gibbs R.A."/>
            <person name="Myers E.W."/>
            <person name="Rubin G.M."/>
            <person name="Venter J.C."/>
        </authorList>
    </citation>
    <scope>NUCLEOTIDE SEQUENCE [LARGE SCALE GENOMIC DNA]</scope>
    <source>
        <strain>Berkeley</strain>
    </source>
</reference>
<reference key="3">
    <citation type="journal article" date="2002" name="Genome Biol.">
        <title>Annotation of the Drosophila melanogaster euchromatic genome: a systematic review.</title>
        <authorList>
            <person name="Misra S."/>
            <person name="Crosby M.A."/>
            <person name="Mungall C.J."/>
            <person name="Matthews B.B."/>
            <person name="Campbell K.S."/>
            <person name="Hradecky P."/>
            <person name="Huang Y."/>
            <person name="Kaminker J.S."/>
            <person name="Millburn G.H."/>
            <person name="Prochnik S.E."/>
            <person name="Smith C.D."/>
            <person name="Tupy J.L."/>
            <person name="Whitfield E.J."/>
            <person name="Bayraktaroglu L."/>
            <person name="Berman B.P."/>
            <person name="Bettencourt B.R."/>
            <person name="Celniker S.E."/>
            <person name="de Grey A.D.N.J."/>
            <person name="Drysdale R.A."/>
            <person name="Harris N.L."/>
            <person name="Richter J."/>
            <person name="Russo S."/>
            <person name="Schroeder A.J."/>
            <person name="Shu S.Q."/>
            <person name="Stapleton M."/>
            <person name="Yamada C."/>
            <person name="Ashburner M."/>
            <person name="Gelbart W.M."/>
            <person name="Rubin G.M."/>
            <person name="Lewis S.E."/>
        </authorList>
    </citation>
    <scope>GENOME REANNOTATION</scope>
    <source>
        <strain>Berkeley</strain>
    </source>
</reference>
<reference key="4">
    <citation type="journal article" date="2002" name="Genome Biol.">
        <title>A Drosophila full-length cDNA resource.</title>
        <authorList>
            <person name="Stapleton M."/>
            <person name="Carlson J.W."/>
            <person name="Brokstein P."/>
            <person name="Yu C."/>
            <person name="Champe M."/>
            <person name="George R.A."/>
            <person name="Guarin H."/>
            <person name="Kronmiller B."/>
            <person name="Pacleb J.M."/>
            <person name="Park S."/>
            <person name="Wan K.H."/>
            <person name="Rubin G.M."/>
            <person name="Celniker S.E."/>
        </authorList>
    </citation>
    <scope>NUCLEOTIDE SEQUENCE [LARGE SCALE MRNA]</scope>
    <source>
        <strain>Berkeley</strain>
        <tissue>Head</tissue>
    </source>
</reference>
<feature type="chain" id="PRO_0000153737" description="Eukaryotic translation initiation factor 6">
    <location>
        <begin position="1"/>
        <end position="245"/>
    </location>
</feature>
<comment type="function">
    <text evidence="1">Binds to the 60S ribosomal subunit and prevents its association with the 40S ribosomal subunit to form the 80S initiation complex in the cytoplasm. May also be involved in ribosome biogenesis.</text>
</comment>
<comment type="subunit">
    <text evidence="1">Monomer. Associates with the 60S ribosomal subunit.</text>
</comment>
<comment type="subcellular location">
    <subcellularLocation>
        <location evidence="1">Cytoplasm</location>
    </subcellularLocation>
    <subcellularLocation>
        <location evidence="1">Nucleus</location>
        <location evidence="1">Nucleolus</location>
    </subcellularLocation>
    <text evidence="1">Shuttles between cytoplasm and nucleus/nucleolus.</text>
</comment>
<comment type="similarity">
    <text evidence="1">Belongs to the eIF-6 family.</text>
</comment>
<protein>
    <recommendedName>
        <fullName evidence="1">Eukaryotic translation initiation factor 6</fullName>
        <shortName evidence="1">eIF-6</shortName>
    </recommendedName>
</protein>
<evidence type="ECO:0000255" key="1">
    <source>
        <dbReference type="HAMAP-Rule" id="MF_03132"/>
    </source>
</evidence>
<accession>P56538</accession>
<accession>Q8MLQ6</accession>
<accession>Q9W1I5</accession>
<keyword id="KW-0963">Cytoplasm</keyword>
<keyword id="KW-0396">Initiation factor</keyword>
<keyword id="KW-0539">Nucleus</keyword>
<keyword id="KW-0648">Protein biosynthesis</keyword>
<keyword id="KW-1185">Reference proteome</keyword>
<keyword id="KW-0690">Ribosome biogenesis</keyword>